<feature type="chain" id="PRO_1000097830" description="5-methyltetrahydropteroyltriglutamate--homocysteine methyltransferase">
    <location>
        <begin position="1"/>
        <end position="748"/>
    </location>
</feature>
<feature type="active site" description="Proton donor" evidence="1">
    <location>
        <position position="687"/>
    </location>
</feature>
<feature type="binding site" evidence="1">
    <location>
        <position position="111"/>
    </location>
    <ligand>
        <name>5-methyltetrahydropteroyltri-L-glutamate</name>
        <dbReference type="ChEBI" id="CHEBI:58207"/>
    </ligand>
</feature>
<feature type="binding site" evidence="1">
    <location>
        <begin position="428"/>
        <end position="430"/>
    </location>
    <ligand>
        <name>L-homocysteine</name>
        <dbReference type="ChEBI" id="CHEBI:58199"/>
    </ligand>
</feature>
<feature type="binding site" evidence="1">
    <location>
        <begin position="428"/>
        <end position="430"/>
    </location>
    <ligand>
        <name>L-methionine</name>
        <dbReference type="ChEBI" id="CHEBI:57844"/>
    </ligand>
</feature>
<feature type="binding site" evidence="1">
    <location>
        <position position="478"/>
    </location>
    <ligand>
        <name>L-homocysteine</name>
        <dbReference type="ChEBI" id="CHEBI:58199"/>
    </ligand>
</feature>
<feature type="binding site" evidence="1">
    <location>
        <position position="478"/>
    </location>
    <ligand>
        <name>L-methionine</name>
        <dbReference type="ChEBI" id="CHEBI:57844"/>
    </ligand>
</feature>
<feature type="binding site" evidence="1">
    <location>
        <begin position="509"/>
        <end position="510"/>
    </location>
    <ligand>
        <name>5-methyltetrahydropteroyltri-L-glutamate</name>
        <dbReference type="ChEBI" id="CHEBI:58207"/>
    </ligand>
</feature>
<feature type="binding site" evidence="1">
    <location>
        <position position="555"/>
    </location>
    <ligand>
        <name>5-methyltetrahydropteroyltri-L-glutamate</name>
        <dbReference type="ChEBI" id="CHEBI:58207"/>
    </ligand>
</feature>
<feature type="binding site" evidence="1">
    <location>
        <position position="593"/>
    </location>
    <ligand>
        <name>L-homocysteine</name>
        <dbReference type="ChEBI" id="CHEBI:58199"/>
    </ligand>
</feature>
<feature type="binding site" evidence="1">
    <location>
        <position position="593"/>
    </location>
    <ligand>
        <name>L-methionine</name>
        <dbReference type="ChEBI" id="CHEBI:57844"/>
    </ligand>
</feature>
<feature type="binding site" evidence="1">
    <location>
        <position position="599"/>
    </location>
    <ligand>
        <name>5-methyltetrahydropteroyltri-L-glutamate</name>
        <dbReference type="ChEBI" id="CHEBI:58207"/>
    </ligand>
</feature>
<feature type="binding site" evidence="1">
    <location>
        <position position="635"/>
    </location>
    <ligand>
        <name>Zn(2+)</name>
        <dbReference type="ChEBI" id="CHEBI:29105"/>
        <note>catalytic</note>
    </ligand>
</feature>
<feature type="binding site" evidence="1">
    <location>
        <position position="637"/>
    </location>
    <ligand>
        <name>Zn(2+)</name>
        <dbReference type="ChEBI" id="CHEBI:29105"/>
        <note>catalytic</note>
    </ligand>
</feature>
<feature type="binding site" evidence="1">
    <location>
        <position position="659"/>
    </location>
    <ligand>
        <name>Zn(2+)</name>
        <dbReference type="ChEBI" id="CHEBI:29105"/>
        <note>catalytic</note>
    </ligand>
</feature>
<feature type="binding site" evidence="1">
    <location>
        <position position="719"/>
    </location>
    <ligand>
        <name>Zn(2+)</name>
        <dbReference type="ChEBI" id="CHEBI:29105"/>
        <note>catalytic</note>
    </ligand>
</feature>
<comment type="function">
    <text evidence="1">Catalyzes the transfer of a methyl group from 5-methyltetrahydrofolate to homocysteine resulting in methionine formation.</text>
</comment>
<comment type="catalytic activity">
    <reaction evidence="1">
        <text>5-methyltetrahydropteroyltri-L-glutamate + L-homocysteine = tetrahydropteroyltri-L-glutamate + L-methionine</text>
        <dbReference type="Rhea" id="RHEA:21196"/>
        <dbReference type="ChEBI" id="CHEBI:57844"/>
        <dbReference type="ChEBI" id="CHEBI:58140"/>
        <dbReference type="ChEBI" id="CHEBI:58199"/>
        <dbReference type="ChEBI" id="CHEBI:58207"/>
        <dbReference type="EC" id="2.1.1.14"/>
    </reaction>
</comment>
<comment type="cofactor">
    <cofactor evidence="1">
        <name>Zn(2+)</name>
        <dbReference type="ChEBI" id="CHEBI:29105"/>
    </cofactor>
    <text evidence="1">Binds 1 zinc ion per subunit.</text>
</comment>
<comment type="pathway">
    <text evidence="1">Amino-acid biosynthesis; L-methionine biosynthesis via de novo pathway; L-methionine from L-homocysteine (MetE route): step 1/1.</text>
</comment>
<comment type="similarity">
    <text evidence="1">Belongs to the vitamin-B12 independent methionine synthase family.</text>
</comment>
<dbReference type="EC" id="2.1.1.14" evidence="1"/>
<dbReference type="EMBL" id="CP000875">
    <property type="protein sequence ID" value="ABX05211.1"/>
    <property type="molecule type" value="Genomic_DNA"/>
</dbReference>
<dbReference type="SMR" id="A9B0A2"/>
<dbReference type="FunCoup" id="A9B0A2">
    <property type="interactions" value="249"/>
</dbReference>
<dbReference type="STRING" id="316274.Haur_2573"/>
<dbReference type="KEGG" id="hau:Haur_2573"/>
<dbReference type="eggNOG" id="COG0620">
    <property type="taxonomic scope" value="Bacteria"/>
</dbReference>
<dbReference type="HOGENOM" id="CLU_013175_0_0_0"/>
<dbReference type="InParanoid" id="A9B0A2"/>
<dbReference type="UniPathway" id="UPA00051">
    <property type="reaction ID" value="UER00082"/>
</dbReference>
<dbReference type="Proteomes" id="UP000000787">
    <property type="component" value="Chromosome"/>
</dbReference>
<dbReference type="GO" id="GO:0003871">
    <property type="term" value="F:5-methyltetrahydropteroyltriglutamate-homocysteine S-methyltransferase activity"/>
    <property type="evidence" value="ECO:0007669"/>
    <property type="project" value="UniProtKB-UniRule"/>
</dbReference>
<dbReference type="GO" id="GO:0008270">
    <property type="term" value="F:zinc ion binding"/>
    <property type="evidence" value="ECO:0007669"/>
    <property type="project" value="InterPro"/>
</dbReference>
<dbReference type="GO" id="GO:0009086">
    <property type="term" value="P:methionine biosynthetic process"/>
    <property type="evidence" value="ECO:0007669"/>
    <property type="project" value="UniProtKB-UniRule"/>
</dbReference>
<dbReference type="GO" id="GO:0032259">
    <property type="term" value="P:methylation"/>
    <property type="evidence" value="ECO:0007669"/>
    <property type="project" value="UniProtKB-KW"/>
</dbReference>
<dbReference type="CDD" id="cd03311">
    <property type="entry name" value="CIMS_C_terminal_like"/>
    <property type="match status" value="1"/>
</dbReference>
<dbReference type="Gene3D" id="3.20.20.210">
    <property type="match status" value="2"/>
</dbReference>
<dbReference type="HAMAP" id="MF_00172">
    <property type="entry name" value="Meth_synth"/>
    <property type="match status" value="1"/>
</dbReference>
<dbReference type="InterPro" id="IPR013215">
    <property type="entry name" value="Cbl-indep_Met_Synth_N"/>
</dbReference>
<dbReference type="InterPro" id="IPR006276">
    <property type="entry name" value="Cobalamin-indep_Met_synthase"/>
</dbReference>
<dbReference type="InterPro" id="IPR002629">
    <property type="entry name" value="Met_Synth_C/arc"/>
</dbReference>
<dbReference type="InterPro" id="IPR038071">
    <property type="entry name" value="UROD/MetE-like_sf"/>
</dbReference>
<dbReference type="NCBIfam" id="TIGR01371">
    <property type="entry name" value="met_syn_B12ind"/>
    <property type="match status" value="1"/>
</dbReference>
<dbReference type="NCBIfam" id="NF003556">
    <property type="entry name" value="PRK05222.1"/>
    <property type="match status" value="1"/>
</dbReference>
<dbReference type="PANTHER" id="PTHR30519">
    <property type="entry name" value="5-METHYLTETRAHYDROPTEROYLTRIGLUTAMATE--HOMOCYSTEINE METHYLTRANSFERASE"/>
    <property type="match status" value="1"/>
</dbReference>
<dbReference type="Pfam" id="PF08267">
    <property type="entry name" value="Meth_synt_1"/>
    <property type="match status" value="1"/>
</dbReference>
<dbReference type="Pfam" id="PF01717">
    <property type="entry name" value="Meth_synt_2"/>
    <property type="match status" value="1"/>
</dbReference>
<dbReference type="PIRSF" id="PIRSF000382">
    <property type="entry name" value="MeTrfase_B12_ind"/>
    <property type="match status" value="1"/>
</dbReference>
<dbReference type="SUPFAM" id="SSF51726">
    <property type="entry name" value="UROD/MetE-like"/>
    <property type="match status" value="2"/>
</dbReference>
<gene>
    <name evidence="1" type="primary">metE</name>
    <name type="ordered locus">Haur_2573</name>
</gene>
<name>METE_HERA2</name>
<reference key="1">
    <citation type="journal article" date="2011" name="Stand. Genomic Sci.">
        <title>Complete genome sequence of the filamentous gliding predatory bacterium Herpetosiphon aurantiacus type strain (114-95(T)).</title>
        <authorList>
            <person name="Kiss H."/>
            <person name="Nett M."/>
            <person name="Domin N."/>
            <person name="Martin K."/>
            <person name="Maresca J.A."/>
            <person name="Copeland A."/>
            <person name="Lapidus A."/>
            <person name="Lucas S."/>
            <person name="Berry K.W."/>
            <person name="Glavina Del Rio T."/>
            <person name="Dalin E."/>
            <person name="Tice H."/>
            <person name="Pitluck S."/>
            <person name="Richardson P."/>
            <person name="Bruce D."/>
            <person name="Goodwin L."/>
            <person name="Han C."/>
            <person name="Detter J.C."/>
            <person name="Schmutz J."/>
            <person name="Brettin T."/>
            <person name="Land M."/>
            <person name="Hauser L."/>
            <person name="Kyrpides N.C."/>
            <person name="Ivanova N."/>
            <person name="Goeker M."/>
            <person name="Woyke T."/>
            <person name="Klenk H.P."/>
            <person name="Bryant D.A."/>
        </authorList>
    </citation>
    <scope>NUCLEOTIDE SEQUENCE [LARGE SCALE GENOMIC DNA]</scope>
    <source>
        <strain>ATCC 23779 / DSM 785 / 114-95</strain>
    </source>
</reference>
<evidence type="ECO:0000255" key="1">
    <source>
        <dbReference type="HAMAP-Rule" id="MF_00172"/>
    </source>
</evidence>
<organism>
    <name type="scientific">Herpetosiphon aurantiacus (strain ATCC 23779 / DSM 785 / 114-95)</name>
    <dbReference type="NCBI Taxonomy" id="316274"/>
    <lineage>
        <taxon>Bacteria</taxon>
        <taxon>Bacillati</taxon>
        <taxon>Chloroflexota</taxon>
        <taxon>Chloroflexia</taxon>
        <taxon>Herpetosiphonales</taxon>
        <taxon>Herpetosiphonaceae</taxon>
        <taxon>Herpetosiphon</taxon>
    </lineage>
</organism>
<accession>A9B0A2</accession>
<keyword id="KW-0028">Amino-acid biosynthesis</keyword>
<keyword id="KW-0479">Metal-binding</keyword>
<keyword id="KW-0486">Methionine biosynthesis</keyword>
<keyword id="KW-0489">Methyltransferase</keyword>
<keyword id="KW-0677">Repeat</keyword>
<keyword id="KW-0808">Transferase</keyword>
<keyword id="KW-0862">Zinc</keyword>
<sequence>MNFQTTVVGYPRVGVGRPYKQALERFWSGKLDETGFRAAINELCHDRLATQAQRLDLVPVGDFSLYDHVLDTALMLGAVPARFGKVDAHNLQGYFALARGRDGLPALEMTKWFDTNYHYLVPEIPERWELQANLVLEQVRFAQNVVGAKARPVLLGPWTFLRLARLAGAELAQHLQQLTAMYAQIVRELNDCNVAFIQCDEPALVGDVTEEEWQAFAACYRELSKHGKIVVQTYYGDVTPWYRELCRLPIHGLGLDLVQGHANWAAIQYHGFPQDKILVAGVVNGRNVWRSDLADLYTKITGLSEFVAPERLILSSSCSLLHLPETVTAERNLPVAVSSGLAFAQERLAELELLANALRDGIASVQPTWDAALASRQQWLDGVGRIVPAVRERTAALGTETPARLAYAERVPLQQAKLNLPLLPTTTIGSFPQTAALRKARAEAKRNPTGYAETINAEIAHVIALQEQWGIDVLVHGEPERNDMVQFFAEHLAGYVATQEGWVQSYGSRCVRPPVIAGDVYRTAALSVAETAYAQSLTKRPVKGMLTGPVTMLQWSFVRDDLPRSAVAAQIGLALRDEVTDLEAAGINIIQIDEPAFREGLPLRRNDWQNYLDWAVRAFRIATSDAKPSTQIHTHMCYSDFNDIIAAIAALDADVISIEDARSAGSLLAGLEGRYTQQIGPGVYDIHSPNIPTVEQLVARMRQLLNYLPAEQLWINPDCGLKTRTYAEVAAALQAMVTATKQVRNQIS</sequence>
<protein>
    <recommendedName>
        <fullName evidence="1">5-methyltetrahydropteroyltriglutamate--homocysteine methyltransferase</fullName>
        <ecNumber evidence="1">2.1.1.14</ecNumber>
    </recommendedName>
    <alternativeName>
        <fullName evidence="1">Cobalamin-independent methionine synthase</fullName>
    </alternativeName>
    <alternativeName>
        <fullName evidence="1">Methionine synthase, vitamin-B12 independent isozyme</fullName>
    </alternativeName>
</protein>
<proteinExistence type="inferred from homology"/>